<evidence type="ECO:0000250" key="1">
    <source>
        <dbReference type="UniProtKB" id="Q7Z7E8"/>
    </source>
</evidence>
<evidence type="ECO:0000255" key="2">
    <source>
        <dbReference type="PROSITE-ProRule" id="PRU00388"/>
    </source>
</evidence>
<evidence type="ECO:0000256" key="3">
    <source>
        <dbReference type="SAM" id="MobiDB-lite"/>
    </source>
</evidence>
<evidence type="ECO:0000269" key="4">
    <source>
    </source>
</evidence>
<evidence type="ECO:0000269" key="5">
    <source>
    </source>
</evidence>
<evidence type="ECO:0000303" key="6">
    <source>
    </source>
</evidence>
<evidence type="ECO:0000303" key="7">
    <source>
    </source>
</evidence>
<evidence type="ECO:0000303" key="8">
    <source>
    </source>
</evidence>
<evidence type="ECO:0000305" key="9"/>
<comment type="function">
    <text evidence="1 4 5 8">Catalyzes the covalent attachment of ubiquitin to other proteins (By similarity). Involved in female fertility and embryo implantation (PubMed:23108111). May be involved in hormonal homeostasis in females (PubMed:23108111). Involved in regulation of B4GALT1 cell surface expression, B4GALT1-mediated cell adhesion to laminin and embryoid body formation (PubMed:18511602).</text>
</comment>
<comment type="catalytic activity">
    <reaction evidence="2">
        <text>S-ubiquitinyl-[E1 ubiquitin-activating enzyme]-L-cysteine + [E2 ubiquitin-conjugating enzyme]-L-cysteine = [E1 ubiquitin-activating enzyme]-L-cysteine + S-ubiquitinyl-[E2 ubiquitin-conjugating enzyme]-L-cysteine.</text>
        <dbReference type="EC" id="2.3.2.23"/>
    </reaction>
</comment>
<comment type="pathway">
    <text evidence="2">Protein modification; protein ubiquitination.</text>
</comment>
<comment type="subunit">
    <text evidence="4">Monomer and homodimer. Only the homodimer is linked to ubiquitin through thiolester activation. Interacts (via N-terminus) with B4GALT1 (via N-terminal cytoplasmic domain); the interaction is direct.</text>
</comment>
<comment type="subcellular location">
    <subcellularLocation>
        <location evidence="4">Nucleus</location>
    </subcellularLocation>
    <subcellularLocation>
        <location evidence="4">Cell projection</location>
        <location evidence="4">Filopodium</location>
    </subcellularLocation>
    <subcellularLocation>
        <location evidence="4">Cytoplasm</location>
        <location evidence="4">Cytosol</location>
    </subcellularLocation>
</comment>
<comment type="alternative products">
    <event type="alternative splicing"/>
    <isoform>
        <id>Q7TSS2-1</id>
        <name>1</name>
        <sequence type="displayed"/>
    </isoform>
    <isoform>
        <id>Q7TSS2-2</id>
        <name>2</name>
        <sequence type="described" ref="VSP_017297"/>
    </isoform>
</comment>
<comment type="tissue specificity">
    <text evidence="4 5">Expressed in liver, brain, heart, spleen, lung, kidney, muscle, ovary, epididymis, testis and placenta (PubMed:23108111). Also expressed in thymus and ES cells (PubMed:18511602). Only expressed in the uterus during pregnancy (PubMed:23108111). Expressed in oocytes and during subsequent embryonic development stages (4-cell stage, blastocyst, 8.5 dpc, 13.5 dpc, 16.5 dpc and 18.5 dpc) (PubMed:23108111).</text>
</comment>
<comment type="PTM">
    <text evidence="1">Autoubiquitinated in vitro in the presence of NEDD4L.</text>
</comment>
<comment type="disruption phenotype">
    <text evidence="5">No reproductive defects in males but females have reduced litter size due to embryo implantation failure, normal ovulation but a longer estrus cycle, reduced levels of serum prolactin at the beginning of lactation, abnormal sexual behavior and show reduced offspring care.</text>
</comment>
<comment type="similarity">
    <text evidence="2">Belongs to the ubiquitin-conjugating enzyme family.</text>
</comment>
<comment type="sequence caution" evidence="9">
    <conflict type="erroneous initiation">
        <sequence resource="EMBL-CDS" id="AAH51487"/>
    </conflict>
    <text>Truncated N-terminus.</text>
</comment>
<comment type="sequence caution" evidence="9">
    <conflict type="erroneous initiation">
        <sequence resource="EMBL-CDS" id="BAB26217"/>
    </conflict>
    <text>Truncated N-terminus.</text>
</comment>
<organism>
    <name type="scientific">Mus musculus</name>
    <name type="common">Mouse</name>
    <dbReference type="NCBI Taxonomy" id="10090"/>
    <lineage>
        <taxon>Eukaryota</taxon>
        <taxon>Metazoa</taxon>
        <taxon>Chordata</taxon>
        <taxon>Craniata</taxon>
        <taxon>Vertebrata</taxon>
        <taxon>Euteleostomi</taxon>
        <taxon>Mammalia</taxon>
        <taxon>Eutheria</taxon>
        <taxon>Euarchontoglires</taxon>
        <taxon>Glires</taxon>
        <taxon>Rodentia</taxon>
        <taxon>Myomorpha</taxon>
        <taxon>Muroidea</taxon>
        <taxon>Muridae</taxon>
        <taxon>Murinae</taxon>
        <taxon>Mus</taxon>
        <taxon>Mus</taxon>
    </lineage>
</organism>
<feature type="chain" id="PRO_0000223877" description="Ubiquitin-conjugating enzyme E2 Q1">
    <location>
        <begin position="1"/>
        <end position="422"/>
    </location>
</feature>
<feature type="domain" description="UBC core" evidence="2">
    <location>
        <begin position="251"/>
        <end position="415"/>
    </location>
</feature>
<feature type="region of interest" description="Disordered" evidence="3">
    <location>
        <begin position="1"/>
        <end position="40"/>
    </location>
</feature>
<feature type="region of interest" description="Disordered" evidence="3">
    <location>
        <begin position="173"/>
        <end position="221"/>
    </location>
</feature>
<feature type="compositionally biased region" description="Low complexity" evidence="3">
    <location>
        <begin position="1"/>
        <end position="24"/>
    </location>
</feature>
<feature type="compositionally biased region" description="Gly residues" evidence="3">
    <location>
        <begin position="25"/>
        <end position="35"/>
    </location>
</feature>
<feature type="compositionally biased region" description="Acidic residues" evidence="3">
    <location>
        <begin position="185"/>
        <end position="200"/>
    </location>
</feature>
<feature type="compositionally biased region" description="Basic and acidic residues" evidence="3">
    <location>
        <begin position="212"/>
        <end position="221"/>
    </location>
</feature>
<feature type="active site" description="Glycyl thioester intermediate" evidence="2">
    <location>
        <position position="351"/>
    </location>
</feature>
<feature type="modified residue" description="N-acetylmethionine" evidence="1">
    <location>
        <position position="1"/>
    </location>
</feature>
<feature type="splice variant" id="VSP_017297" description="In isoform 2." evidence="6">
    <location>
        <begin position="1"/>
        <end position="169"/>
    </location>
</feature>
<feature type="mutagenesis site" description="Loss of ubiquitin binding. Normal dimer formation." evidence="4">
    <original>C</original>
    <variation>A</variation>
    <location>
        <position position="351"/>
    </location>
</feature>
<feature type="sequence conflict" description="In Ref. 1; AAM60815." evidence="9" ref="1">
    <original>V</original>
    <variation>G</variation>
    <location>
        <position position="121"/>
    </location>
</feature>
<feature type="sequence conflict" description="In Ref. 1; AAM60815." evidence="9" ref="1">
    <original>DP</original>
    <variation>AL</variation>
    <location>
        <begin position="125"/>
        <end position="126"/>
    </location>
</feature>
<feature type="sequence conflict" description="In Ref. 1; AAM60815." evidence="9" ref="1">
    <original>K</original>
    <variation>R</variation>
    <location>
        <position position="139"/>
    </location>
</feature>
<gene>
    <name type="primary">Ube2q1</name>
    <name type="synonym">Ube2q</name>
</gene>
<proteinExistence type="evidence at protein level"/>
<accession>Q7TSS2</accession>
<accession>Q29ST1</accession>
<accession>Q3UIY3</accession>
<accession>Q6P913</accession>
<accession>Q80UT5</accession>
<accession>Q8K2T0</accession>
<accession>Q9D7E1</accession>
<protein>
    <recommendedName>
        <fullName>Ubiquitin-conjugating enzyme E2 Q1</fullName>
        <ecNumber>2.3.2.23</ecNumber>
    </recommendedName>
    <alternativeName>
        <fullName>E2 ubiquitin-conjugating enzyme Q1</fullName>
    </alternativeName>
    <alternativeName>
        <fullName evidence="7">Galactosyl transferase-associated protein</fullName>
        <shortName evidence="7">GTAP</shortName>
    </alternativeName>
    <alternativeName>
        <fullName>Ubiquitin carrier protein Q1</fullName>
    </alternativeName>
    <alternativeName>
        <fullName>Ubiquitin-protein ligase Q1</fullName>
    </alternativeName>
</protein>
<keyword id="KW-0007">Acetylation</keyword>
<keyword id="KW-0025">Alternative splicing</keyword>
<keyword id="KW-0067">ATP-binding</keyword>
<keyword id="KW-0966">Cell projection</keyword>
<keyword id="KW-0963">Cytoplasm</keyword>
<keyword id="KW-0547">Nucleotide-binding</keyword>
<keyword id="KW-0539">Nucleus</keyword>
<keyword id="KW-1185">Reference proteome</keyword>
<keyword id="KW-0808">Transferase</keyword>
<keyword id="KW-0832">Ubl conjugation</keyword>
<keyword id="KW-0833">Ubl conjugation pathway</keyword>
<name>UB2Q1_MOUSE</name>
<sequence>MQQPQPQGQQQPGPGQQLGVQGAAPGAGGGPGGGPGPGPCLRRELKLLESIFHRGHERFRIASACLDELSCEFLLAGAGGAGAGAAPGPHLPSRGSVPGDPVRIHCNITESYPAVPPIWSVESDDPNLAAVLERLVDIKKGNTLLLQHLKRIISDLCKLYNLPQHPDVEMLDQPLPAEQCTQEEVSSEDEDEEMPEDTEDLDHYEMKEEEPAEGKKSEDDGIGKENLAILEKIKKNQRQDYLNGAVSGSVQATDRLMKELRDIYRSQSFKGGNYAVELVNDSLYDWNVKLLKVDQDSALHNDLQILKEKEGADFILLNFSFKDNFPFDPPFVRVVSPVLSGGYVLGGGAICMELLTKQGWSSAYSIESVIMQISATLVKGKARVQFGANKSQYSLTRAQQSYKSLVQIHEKNGWYTPPKEDG</sequence>
<dbReference type="EC" id="2.3.2.23"/>
<dbReference type="EMBL" id="AY945937">
    <property type="protein sequence ID" value="AAY23286.1"/>
    <property type="molecule type" value="mRNA"/>
</dbReference>
<dbReference type="EMBL" id="AY112699">
    <property type="protein sequence ID" value="AAM60815.1"/>
    <property type="molecule type" value="mRNA"/>
</dbReference>
<dbReference type="EMBL" id="AK009324">
    <property type="protein sequence ID" value="BAB26217.2"/>
    <property type="status" value="ALT_INIT"/>
    <property type="molecule type" value="mRNA"/>
</dbReference>
<dbReference type="EMBL" id="AK146707">
    <property type="protein sequence ID" value="BAE27373.1"/>
    <property type="molecule type" value="mRNA"/>
</dbReference>
<dbReference type="EMBL" id="BC030044">
    <property type="protein sequence ID" value="AAH30044.2"/>
    <property type="molecule type" value="mRNA"/>
</dbReference>
<dbReference type="EMBL" id="BC051487">
    <property type="protein sequence ID" value="AAH51487.1"/>
    <property type="status" value="ALT_INIT"/>
    <property type="molecule type" value="mRNA"/>
</dbReference>
<dbReference type="EMBL" id="BC060966">
    <property type="protein sequence ID" value="AAH60966.1"/>
    <property type="molecule type" value="mRNA"/>
</dbReference>
<dbReference type="EMBL" id="BC082275">
    <property type="protein sequence ID" value="AAH82275.1"/>
    <property type="molecule type" value="mRNA"/>
</dbReference>
<dbReference type="CCDS" id="CCDS17517.1">
    <molecule id="Q7TSS2-1"/>
</dbReference>
<dbReference type="RefSeq" id="NP_081591.3">
    <molecule id="Q7TSS2-1"/>
    <property type="nucleotide sequence ID" value="NM_027315.4"/>
</dbReference>
<dbReference type="RefSeq" id="XP_036019192.1">
    <molecule id="Q7TSS2-2"/>
    <property type="nucleotide sequence ID" value="XM_036163299.1"/>
</dbReference>
<dbReference type="SMR" id="Q7TSS2"/>
<dbReference type="BioGRID" id="213860">
    <property type="interactions" value="2"/>
</dbReference>
<dbReference type="FunCoup" id="Q7TSS2">
    <property type="interactions" value="4999"/>
</dbReference>
<dbReference type="STRING" id="10090.ENSMUSP00000037939"/>
<dbReference type="iPTMnet" id="Q7TSS2"/>
<dbReference type="PhosphoSitePlus" id="Q7TSS2"/>
<dbReference type="PaxDb" id="10090-ENSMUSP00000037939"/>
<dbReference type="PeptideAtlas" id="Q7TSS2"/>
<dbReference type="ProteomicsDB" id="298174">
    <molecule id="Q7TSS2-1"/>
</dbReference>
<dbReference type="ProteomicsDB" id="298175">
    <molecule id="Q7TSS2-2"/>
</dbReference>
<dbReference type="Pumba" id="Q7TSS2"/>
<dbReference type="Antibodypedia" id="34155">
    <property type="antibodies" value="141 antibodies from 22 providers"/>
</dbReference>
<dbReference type="DNASU" id="70093"/>
<dbReference type="Ensembl" id="ENSMUST00000038356.13">
    <molecule id="Q7TSS2-1"/>
    <property type="protein sequence ID" value="ENSMUSP00000037939.9"/>
    <property type="gene ID" value="ENSMUSG00000042572.13"/>
</dbReference>
<dbReference type="Ensembl" id="ENSMUST00000196726.2">
    <molecule id="Q7TSS2-2"/>
    <property type="protein sequence ID" value="ENSMUSP00000143422.2"/>
    <property type="gene ID" value="ENSMUSG00000042572.13"/>
</dbReference>
<dbReference type="GeneID" id="70093"/>
<dbReference type="KEGG" id="mmu:70093"/>
<dbReference type="UCSC" id="uc008qad.2">
    <molecule id="Q7TSS2-1"/>
    <property type="organism name" value="mouse"/>
</dbReference>
<dbReference type="AGR" id="MGI:1917343"/>
<dbReference type="CTD" id="55585"/>
<dbReference type="MGI" id="MGI:1917343">
    <property type="gene designation" value="Ube2q1"/>
</dbReference>
<dbReference type="VEuPathDB" id="HostDB:ENSMUSG00000042572"/>
<dbReference type="eggNOG" id="KOG0897">
    <property type="taxonomic scope" value="Eukaryota"/>
</dbReference>
<dbReference type="GeneTree" id="ENSGT00940000160166"/>
<dbReference type="InParanoid" id="Q7TSS2"/>
<dbReference type="OMA" id="VFPKNHE"/>
<dbReference type="OrthoDB" id="109543at2759"/>
<dbReference type="PhylomeDB" id="Q7TSS2"/>
<dbReference type="TreeFam" id="TF313338"/>
<dbReference type="Reactome" id="R-MMU-983168">
    <property type="pathway name" value="Antigen processing: Ubiquitination &amp; Proteasome degradation"/>
</dbReference>
<dbReference type="UniPathway" id="UPA00143"/>
<dbReference type="BioGRID-ORCS" id="70093">
    <property type="hits" value="2 hits in 78 CRISPR screens"/>
</dbReference>
<dbReference type="PRO" id="PR:Q7TSS2"/>
<dbReference type="Proteomes" id="UP000000589">
    <property type="component" value="Chromosome 3"/>
</dbReference>
<dbReference type="RNAct" id="Q7TSS2">
    <property type="molecule type" value="protein"/>
</dbReference>
<dbReference type="Bgee" id="ENSMUSG00000042572">
    <property type="expression patterns" value="Expressed in dorsal pancreas and 229 other cell types or tissues"/>
</dbReference>
<dbReference type="GO" id="GO:0005829">
    <property type="term" value="C:cytosol"/>
    <property type="evidence" value="ECO:0007669"/>
    <property type="project" value="UniProtKB-SubCell"/>
</dbReference>
<dbReference type="GO" id="GO:0030175">
    <property type="term" value="C:filopodium"/>
    <property type="evidence" value="ECO:0007669"/>
    <property type="project" value="UniProtKB-SubCell"/>
</dbReference>
<dbReference type="GO" id="GO:0005634">
    <property type="term" value="C:nucleus"/>
    <property type="evidence" value="ECO:0007669"/>
    <property type="project" value="UniProtKB-SubCell"/>
</dbReference>
<dbReference type="GO" id="GO:0005524">
    <property type="term" value="F:ATP binding"/>
    <property type="evidence" value="ECO:0007669"/>
    <property type="project" value="UniProtKB-KW"/>
</dbReference>
<dbReference type="GO" id="GO:0061631">
    <property type="term" value="F:ubiquitin conjugating enzyme activity"/>
    <property type="evidence" value="ECO:0000314"/>
    <property type="project" value="MGI"/>
</dbReference>
<dbReference type="GO" id="GO:0007566">
    <property type="term" value="P:embryo implantation"/>
    <property type="evidence" value="ECO:0000315"/>
    <property type="project" value="MGI"/>
</dbReference>
<dbReference type="GO" id="GO:0009566">
    <property type="term" value="P:fertilization"/>
    <property type="evidence" value="ECO:0000315"/>
    <property type="project" value="MGI"/>
</dbReference>
<dbReference type="GO" id="GO:0007617">
    <property type="term" value="P:mating behavior"/>
    <property type="evidence" value="ECO:0000315"/>
    <property type="project" value="MGI"/>
</dbReference>
<dbReference type="GO" id="GO:0070459">
    <property type="term" value="P:prolactin secretion"/>
    <property type="evidence" value="ECO:0000315"/>
    <property type="project" value="MGI"/>
</dbReference>
<dbReference type="GO" id="GO:0016567">
    <property type="term" value="P:protein ubiquitination"/>
    <property type="evidence" value="ECO:0007669"/>
    <property type="project" value="UniProtKB-UniPathway"/>
</dbReference>
<dbReference type="GO" id="GO:0061458">
    <property type="term" value="P:reproductive system development"/>
    <property type="evidence" value="ECO:0000315"/>
    <property type="project" value="MGI"/>
</dbReference>
<dbReference type="GO" id="GO:0001967">
    <property type="term" value="P:suckling behavior"/>
    <property type="evidence" value="ECO:0000315"/>
    <property type="project" value="MGI"/>
</dbReference>
<dbReference type="CDD" id="cd23802">
    <property type="entry name" value="UBCc_UBE2Q"/>
    <property type="match status" value="1"/>
</dbReference>
<dbReference type="FunFam" id="3.10.110.10:FF:000006">
    <property type="entry name" value="Ubiquitin-conjugating enzyme E2 Q2"/>
    <property type="match status" value="1"/>
</dbReference>
<dbReference type="Gene3D" id="3.10.110.10">
    <property type="entry name" value="Ubiquitin Conjugating Enzyme"/>
    <property type="match status" value="1"/>
</dbReference>
<dbReference type="InterPro" id="IPR000608">
    <property type="entry name" value="UBQ-conjugat_E2_core"/>
</dbReference>
<dbReference type="InterPro" id="IPR016135">
    <property type="entry name" value="UBQ-conjugating_enzyme/RWD"/>
</dbReference>
<dbReference type="Pfam" id="PF00179">
    <property type="entry name" value="UQ_con"/>
    <property type="match status" value="1"/>
</dbReference>
<dbReference type="SMART" id="SM00212">
    <property type="entry name" value="UBCc"/>
    <property type="match status" value="1"/>
</dbReference>
<dbReference type="SUPFAM" id="SSF54495">
    <property type="entry name" value="UBC-like"/>
    <property type="match status" value="2"/>
</dbReference>
<dbReference type="PROSITE" id="PS50127">
    <property type="entry name" value="UBC_2"/>
    <property type="match status" value="1"/>
</dbReference>
<reference key="1">
    <citation type="journal article" date="2008" name="Stem Cells">
        <title>Characterization of a novel ubiquitin-conjugating enzyme that regulates beta1,4-galactosyltransferase-1 in embryonic stem cells.</title>
        <authorList>
            <person name="Wassler M.J."/>
            <person name="Shur B.D."/>
            <person name="Zhou W."/>
            <person name="Geng Y.J."/>
        </authorList>
    </citation>
    <scope>NUCLEOTIDE SEQUENCE [MRNA] (ISOFORM 1)</scope>
    <scope>FUNCTION</scope>
    <scope>SUBCELLULAR LOCATION</scope>
    <scope>TISSUE SPECIFICITY</scope>
    <scope>INTERACTION WITH B4GALT1</scope>
    <scope>MUTAGENESIS OF CYS-351</scope>
</reference>
<reference key="2">
    <citation type="journal article" date="2004" name="Genome Res.">
        <title>The status, quality, and expansion of the NIH full-length cDNA project: the Mammalian Gene Collection (MGC).</title>
        <authorList>
            <consortium name="The MGC Project Team"/>
        </authorList>
    </citation>
    <scope>NUCLEOTIDE SEQUENCE [LARGE SCALE MRNA] (ISOFORM 2)</scope>
    <scope>NUCLEOTIDE SEQUENCE [LARGE SCALE MRNA] OF 169-422 (ISOFORM 1)</scope>
    <source>
        <tissue>Brain</tissue>
        <tissue>Mammary gland</tissue>
        <tissue>Thymus</tissue>
    </source>
</reference>
<reference key="3">
    <citation type="journal article" date="2005" name="Science">
        <title>The transcriptional landscape of the mammalian genome.</title>
        <authorList>
            <person name="Carninci P."/>
            <person name="Kasukawa T."/>
            <person name="Katayama S."/>
            <person name="Gough J."/>
            <person name="Frith M.C."/>
            <person name="Maeda N."/>
            <person name="Oyama R."/>
            <person name="Ravasi T."/>
            <person name="Lenhard B."/>
            <person name="Wells C."/>
            <person name="Kodzius R."/>
            <person name="Shimokawa K."/>
            <person name="Bajic V.B."/>
            <person name="Brenner S.E."/>
            <person name="Batalov S."/>
            <person name="Forrest A.R."/>
            <person name="Zavolan M."/>
            <person name="Davis M.J."/>
            <person name="Wilming L.G."/>
            <person name="Aidinis V."/>
            <person name="Allen J.E."/>
            <person name="Ambesi-Impiombato A."/>
            <person name="Apweiler R."/>
            <person name="Aturaliya R.N."/>
            <person name="Bailey T.L."/>
            <person name="Bansal M."/>
            <person name="Baxter L."/>
            <person name="Beisel K.W."/>
            <person name="Bersano T."/>
            <person name="Bono H."/>
            <person name="Chalk A.M."/>
            <person name="Chiu K.P."/>
            <person name="Choudhary V."/>
            <person name="Christoffels A."/>
            <person name="Clutterbuck D.R."/>
            <person name="Crowe M.L."/>
            <person name="Dalla E."/>
            <person name="Dalrymple B.P."/>
            <person name="de Bono B."/>
            <person name="Della Gatta G."/>
            <person name="di Bernardo D."/>
            <person name="Down T."/>
            <person name="Engstrom P."/>
            <person name="Fagiolini M."/>
            <person name="Faulkner G."/>
            <person name="Fletcher C.F."/>
            <person name="Fukushima T."/>
            <person name="Furuno M."/>
            <person name="Futaki S."/>
            <person name="Gariboldi M."/>
            <person name="Georgii-Hemming P."/>
            <person name="Gingeras T.R."/>
            <person name="Gojobori T."/>
            <person name="Green R.E."/>
            <person name="Gustincich S."/>
            <person name="Harbers M."/>
            <person name="Hayashi Y."/>
            <person name="Hensch T.K."/>
            <person name="Hirokawa N."/>
            <person name="Hill D."/>
            <person name="Huminiecki L."/>
            <person name="Iacono M."/>
            <person name="Ikeo K."/>
            <person name="Iwama A."/>
            <person name="Ishikawa T."/>
            <person name="Jakt M."/>
            <person name="Kanapin A."/>
            <person name="Katoh M."/>
            <person name="Kawasawa Y."/>
            <person name="Kelso J."/>
            <person name="Kitamura H."/>
            <person name="Kitano H."/>
            <person name="Kollias G."/>
            <person name="Krishnan S.P."/>
            <person name="Kruger A."/>
            <person name="Kummerfeld S.K."/>
            <person name="Kurochkin I.V."/>
            <person name="Lareau L.F."/>
            <person name="Lazarevic D."/>
            <person name="Lipovich L."/>
            <person name="Liu J."/>
            <person name="Liuni S."/>
            <person name="McWilliam S."/>
            <person name="Madan Babu M."/>
            <person name="Madera M."/>
            <person name="Marchionni L."/>
            <person name="Matsuda H."/>
            <person name="Matsuzawa S."/>
            <person name="Miki H."/>
            <person name="Mignone F."/>
            <person name="Miyake S."/>
            <person name="Morris K."/>
            <person name="Mottagui-Tabar S."/>
            <person name="Mulder N."/>
            <person name="Nakano N."/>
            <person name="Nakauchi H."/>
            <person name="Ng P."/>
            <person name="Nilsson R."/>
            <person name="Nishiguchi S."/>
            <person name="Nishikawa S."/>
            <person name="Nori F."/>
            <person name="Ohara O."/>
            <person name="Okazaki Y."/>
            <person name="Orlando V."/>
            <person name="Pang K.C."/>
            <person name="Pavan W.J."/>
            <person name="Pavesi G."/>
            <person name="Pesole G."/>
            <person name="Petrovsky N."/>
            <person name="Piazza S."/>
            <person name="Reed J."/>
            <person name="Reid J.F."/>
            <person name="Ring B.Z."/>
            <person name="Ringwald M."/>
            <person name="Rost B."/>
            <person name="Ruan Y."/>
            <person name="Salzberg S.L."/>
            <person name="Sandelin A."/>
            <person name="Schneider C."/>
            <person name="Schoenbach C."/>
            <person name="Sekiguchi K."/>
            <person name="Semple C.A."/>
            <person name="Seno S."/>
            <person name="Sessa L."/>
            <person name="Sheng Y."/>
            <person name="Shibata Y."/>
            <person name="Shimada H."/>
            <person name="Shimada K."/>
            <person name="Silva D."/>
            <person name="Sinclair B."/>
            <person name="Sperling S."/>
            <person name="Stupka E."/>
            <person name="Sugiura K."/>
            <person name="Sultana R."/>
            <person name="Takenaka Y."/>
            <person name="Taki K."/>
            <person name="Tammoja K."/>
            <person name="Tan S.L."/>
            <person name="Tang S."/>
            <person name="Taylor M.S."/>
            <person name="Tegner J."/>
            <person name="Teichmann S.A."/>
            <person name="Ueda H.R."/>
            <person name="van Nimwegen E."/>
            <person name="Verardo R."/>
            <person name="Wei C.L."/>
            <person name="Yagi K."/>
            <person name="Yamanishi H."/>
            <person name="Zabarovsky E."/>
            <person name="Zhu S."/>
            <person name="Zimmer A."/>
            <person name="Hide W."/>
            <person name="Bult C."/>
            <person name="Grimmond S.M."/>
            <person name="Teasdale R.D."/>
            <person name="Liu E.T."/>
            <person name="Brusic V."/>
            <person name="Quackenbush J."/>
            <person name="Wahlestedt C."/>
            <person name="Mattick J.S."/>
            <person name="Hume D.A."/>
            <person name="Kai C."/>
            <person name="Sasaki D."/>
            <person name="Tomaru Y."/>
            <person name="Fukuda S."/>
            <person name="Kanamori-Katayama M."/>
            <person name="Suzuki M."/>
            <person name="Aoki J."/>
            <person name="Arakawa T."/>
            <person name="Iida J."/>
            <person name="Imamura K."/>
            <person name="Itoh M."/>
            <person name="Kato T."/>
            <person name="Kawaji H."/>
            <person name="Kawagashira N."/>
            <person name="Kawashima T."/>
            <person name="Kojima M."/>
            <person name="Kondo S."/>
            <person name="Konno H."/>
            <person name="Nakano K."/>
            <person name="Ninomiya N."/>
            <person name="Nishio T."/>
            <person name="Okada M."/>
            <person name="Plessy C."/>
            <person name="Shibata K."/>
            <person name="Shiraki T."/>
            <person name="Suzuki S."/>
            <person name="Tagami M."/>
            <person name="Waki K."/>
            <person name="Watahiki A."/>
            <person name="Okamura-Oho Y."/>
            <person name="Suzuki H."/>
            <person name="Kawai J."/>
            <person name="Hayashizaki Y."/>
        </authorList>
    </citation>
    <scope>NUCLEOTIDE SEQUENCE [LARGE SCALE MRNA] OF 29-422 (ISOFORM 1)</scope>
    <source>
        <strain>C57BL/6J</strain>
        <tissue>Fetal heart</tissue>
        <tissue>Tongue</tissue>
    </source>
</reference>
<reference key="4">
    <citation type="journal article" date="2010" name="Cell">
        <title>A tissue-specific atlas of mouse protein phosphorylation and expression.</title>
        <authorList>
            <person name="Huttlin E.L."/>
            <person name="Jedrychowski M.P."/>
            <person name="Elias J.E."/>
            <person name="Goswami T."/>
            <person name="Rad R."/>
            <person name="Beausoleil S.A."/>
            <person name="Villen J."/>
            <person name="Haas W."/>
            <person name="Sowa M.E."/>
            <person name="Gygi S.P."/>
        </authorList>
    </citation>
    <scope>IDENTIFICATION BY MASS SPECTROMETRY [LARGE SCALE ANALYSIS]</scope>
    <source>
        <tissue>Brain</tissue>
        <tissue>Lung</tissue>
        <tissue>Spleen</tissue>
        <tissue>Testis</tissue>
    </source>
</reference>
<reference key="5">
    <citation type="journal article" date="2013" name="Reproduction">
        <title>Embryo implantation failure and other reproductive defects in Ube2q1-deficient female mice.</title>
        <authorList>
            <person name="Grzmil P."/>
            <person name="Altmann M.E."/>
            <person name="Adham I.M."/>
            <person name="Engel U."/>
            <person name="Jarry H."/>
            <person name="Schweyer S."/>
            <person name="Wolf S."/>
            <person name="Manz J."/>
            <person name="Engel W."/>
        </authorList>
    </citation>
    <scope>FUNCTION</scope>
    <scope>TISSUE SPECIFICITY</scope>
    <scope>DISRUPTION PHENOTYPE</scope>
</reference>